<evidence type="ECO:0000250" key="1"/>
<evidence type="ECO:0000255" key="2">
    <source>
        <dbReference type="HAMAP-Rule" id="MF_00118"/>
    </source>
</evidence>
<accession>Q605B0</accession>
<keyword id="KW-0963">Cytoplasm</keyword>
<keyword id="KW-0251">Elongation factor</keyword>
<keyword id="KW-0342">GTP-binding</keyword>
<keyword id="KW-0378">Hydrolase</keyword>
<keyword id="KW-0460">Magnesium</keyword>
<keyword id="KW-0479">Metal-binding</keyword>
<keyword id="KW-0547">Nucleotide-binding</keyword>
<keyword id="KW-0648">Protein biosynthesis</keyword>
<keyword id="KW-1185">Reference proteome</keyword>
<sequence length="396" mass="43046">MSKEKFTRTKPHVNVGTIGHVDHGKTTLTAALTKCMAAKFGGEFKAYDQIDAAPEERARGITIATAHVEYESAARHYAHVDCPGHADYVKNMITGAAQMDGAILVVSAADGPMPQTREHILLARQVGVPYIVVFLNKADMVDDPELLELVEMEVRELLSKYDFPGDDIPIIKGSALKALEGDGSEIGVPAVEALVQALDDYIPEPERAIDRPFLMPIEDVFSISGRGTVVTGRVERGIIKVGEEIEIVGIRPTAKTTCTGVEMFRKLLDQGQAGDNIGVLLRGTKREDVERGQVLAKPGSITPHTHFEAEIYVLSKEEGGRHTPFFNGYRPQFYFRTTDVTGAVTLPEGVEMVMPGDNVKIEVKLIAPIAMDEGLRFAVREGGRTVGAGVVSKIIE</sequence>
<reference key="1">
    <citation type="journal article" date="2004" name="PLoS Biol.">
        <title>Genomic insights into methanotrophy: the complete genome sequence of Methylococcus capsulatus (Bath).</title>
        <authorList>
            <person name="Ward N.L."/>
            <person name="Larsen O."/>
            <person name="Sakwa J."/>
            <person name="Bruseth L."/>
            <person name="Khouri H.M."/>
            <person name="Durkin A.S."/>
            <person name="Dimitrov G."/>
            <person name="Jiang L."/>
            <person name="Scanlan D."/>
            <person name="Kang K.H."/>
            <person name="Lewis M.R."/>
            <person name="Nelson K.E."/>
            <person name="Methe B.A."/>
            <person name="Wu M."/>
            <person name="Heidelberg J.F."/>
            <person name="Paulsen I.T."/>
            <person name="Fouts D.E."/>
            <person name="Ravel J."/>
            <person name="Tettelin H."/>
            <person name="Ren Q."/>
            <person name="Read T.D."/>
            <person name="DeBoy R.T."/>
            <person name="Seshadri R."/>
            <person name="Salzberg S.L."/>
            <person name="Jensen H.B."/>
            <person name="Birkeland N.K."/>
            <person name="Nelson W.C."/>
            <person name="Dodson R.J."/>
            <person name="Grindhaug S.H."/>
            <person name="Holt I.E."/>
            <person name="Eidhammer I."/>
            <person name="Jonasen I."/>
            <person name="Vanaken S."/>
            <person name="Utterback T.R."/>
            <person name="Feldblyum T.V."/>
            <person name="Fraser C.M."/>
            <person name="Lillehaug J.R."/>
            <person name="Eisen J.A."/>
        </authorList>
    </citation>
    <scope>NUCLEOTIDE SEQUENCE [LARGE SCALE GENOMIC DNA]</scope>
    <source>
        <strain>ATCC 33009 / NCIMB 11132 / Bath</strain>
    </source>
</reference>
<proteinExistence type="inferred from homology"/>
<name>EFTU_METCA</name>
<organism>
    <name type="scientific">Methylococcus capsulatus (strain ATCC 33009 / NCIMB 11132 / Bath)</name>
    <dbReference type="NCBI Taxonomy" id="243233"/>
    <lineage>
        <taxon>Bacteria</taxon>
        <taxon>Pseudomonadati</taxon>
        <taxon>Pseudomonadota</taxon>
        <taxon>Gammaproteobacteria</taxon>
        <taxon>Methylococcales</taxon>
        <taxon>Methylococcaceae</taxon>
        <taxon>Methylococcus</taxon>
    </lineage>
</organism>
<gene>
    <name evidence="2" type="primary">tuf1</name>
    <name type="ordered locus">MCA1059</name>
</gene>
<gene>
    <name evidence="2" type="primary">tuf2</name>
    <name type="ordered locus">MCA2374</name>
</gene>
<comment type="function">
    <text evidence="2">GTP hydrolase that promotes the GTP-dependent binding of aminoacyl-tRNA to the A-site of ribosomes during protein biosynthesis.</text>
</comment>
<comment type="catalytic activity">
    <reaction evidence="2">
        <text>GTP + H2O = GDP + phosphate + H(+)</text>
        <dbReference type="Rhea" id="RHEA:19669"/>
        <dbReference type="ChEBI" id="CHEBI:15377"/>
        <dbReference type="ChEBI" id="CHEBI:15378"/>
        <dbReference type="ChEBI" id="CHEBI:37565"/>
        <dbReference type="ChEBI" id="CHEBI:43474"/>
        <dbReference type="ChEBI" id="CHEBI:58189"/>
        <dbReference type="EC" id="3.6.5.3"/>
    </reaction>
    <physiologicalReaction direction="left-to-right" evidence="2">
        <dbReference type="Rhea" id="RHEA:19670"/>
    </physiologicalReaction>
</comment>
<comment type="subunit">
    <text evidence="2">Monomer.</text>
</comment>
<comment type="subcellular location">
    <subcellularLocation>
        <location evidence="2">Cytoplasm</location>
    </subcellularLocation>
</comment>
<comment type="similarity">
    <text evidence="2">Belongs to the TRAFAC class translation factor GTPase superfamily. Classic translation factor GTPase family. EF-Tu/EF-1A subfamily.</text>
</comment>
<feature type="chain" id="PRO_0000337434" description="Elongation factor Tu">
    <location>
        <begin position="1"/>
        <end position="396"/>
    </location>
</feature>
<feature type="domain" description="tr-type G">
    <location>
        <begin position="10"/>
        <end position="206"/>
    </location>
</feature>
<feature type="region of interest" description="G1" evidence="1">
    <location>
        <begin position="19"/>
        <end position="26"/>
    </location>
</feature>
<feature type="region of interest" description="G2" evidence="1">
    <location>
        <begin position="60"/>
        <end position="64"/>
    </location>
</feature>
<feature type="region of interest" description="G3" evidence="1">
    <location>
        <begin position="81"/>
        <end position="84"/>
    </location>
</feature>
<feature type="region of interest" description="G4" evidence="1">
    <location>
        <begin position="136"/>
        <end position="139"/>
    </location>
</feature>
<feature type="region of interest" description="G5" evidence="1">
    <location>
        <begin position="174"/>
        <end position="176"/>
    </location>
</feature>
<feature type="binding site" evidence="2">
    <location>
        <begin position="19"/>
        <end position="26"/>
    </location>
    <ligand>
        <name>GTP</name>
        <dbReference type="ChEBI" id="CHEBI:37565"/>
    </ligand>
</feature>
<feature type="binding site" evidence="2">
    <location>
        <position position="26"/>
    </location>
    <ligand>
        <name>Mg(2+)</name>
        <dbReference type="ChEBI" id="CHEBI:18420"/>
    </ligand>
</feature>
<feature type="binding site" evidence="2">
    <location>
        <begin position="81"/>
        <end position="85"/>
    </location>
    <ligand>
        <name>GTP</name>
        <dbReference type="ChEBI" id="CHEBI:37565"/>
    </ligand>
</feature>
<feature type="binding site" evidence="2">
    <location>
        <begin position="136"/>
        <end position="139"/>
    </location>
    <ligand>
        <name>GTP</name>
        <dbReference type="ChEBI" id="CHEBI:37565"/>
    </ligand>
</feature>
<protein>
    <recommendedName>
        <fullName evidence="2">Elongation factor Tu</fullName>
        <shortName evidence="2">EF-Tu</shortName>
        <ecNumber evidence="2">3.6.5.3</ecNumber>
    </recommendedName>
</protein>
<dbReference type="EC" id="3.6.5.3" evidence="2"/>
<dbReference type="EMBL" id="AE017282">
    <property type="protein sequence ID" value="AAU91598.1"/>
    <property type="molecule type" value="Genomic_DNA"/>
</dbReference>
<dbReference type="EMBL" id="AE017282">
    <property type="protein sequence ID" value="AAU92683.1"/>
    <property type="molecule type" value="Genomic_DNA"/>
</dbReference>
<dbReference type="RefSeq" id="WP_010960359.1">
    <property type="nucleotide sequence ID" value="NC_002977.6"/>
</dbReference>
<dbReference type="SMR" id="Q605B0"/>
<dbReference type="STRING" id="243233.MCA1059"/>
<dbReference type="GeneID" id="88224576"/>
<dbReference type="KEGG" id="mca:MCA1059"/>
<dbReference type="KEGG" id="mca:MCA2374"/>
<dbReference type="eggNOG" id="COG0050">
    <property type="taxonomic scope" value="Bacteria"/>
</dbReference>
<dbReference type="HOGENOM" id="CLU_007265_0_0_6"/>
<dbReference type="Proteomes" id="UP000006821">
    <property type="component" value="Chromosome"/>
</dbReference>
<dbReference type="GO" id="GO:0005829">
    <property type="term" value="C:cytosol"/>
    <property type="evidence" value="ECO:0007669"/>
    <property type="project" value="TreeGrafter"/>
</dbReference>
<dbReference type="GO" id="GO:0005525">
    <property type="term" value="F:GTP binding"/>
    <property type="evidence" value="ECO:0007669"/>
    <property type="project" value="UniProtKB-UniRule"/>
</dbReference>
<dbReference type="GO" id="GO:0003924">
    <property type="term" value="F:GTPase activity"/>
    <property type="evidence" value="ECO:0007669"/>
    <property type="project" value="InterPro"/>
</dbReference>
<dbReference type="GO" id="GO:0097216">
    <property type="term" value="F:guanosine tetraphosphate binding"/>
    <property type="evidence" value="ECO:0007669"/>
    <property type="project" value="UniProtKB-ARBA"/>
</dbReference>
<dbReference type="GO" id="GO:0003746">
    <property type="term" value="F:translation elongation factor activity"/>
    <property type="evidence" value="ECO:0007669"/>
    <property type="project" value="UniProtKB-UniRule"/>
</dbReference>
<dbReference type="CDD" id="cd01884">
    <property type="entry name" value="EF_Tu"/>
    <property type="match status" value="1"/>
</dbReference>
<dbReference type="CDD" id="cd03697">
    <property type="entry name" value="EFTU_II"/>
    <property type="match status" value="1"/>
</dbReference>
<dbReference type="CDD" id="cd03707">
    <property type="entry name" value="EFTU_III"/>
    <property type="match status" value="1"/>
</dbReference>
<dbReference type="FunFam" id="2.40.30.10:FF:000001">
    <property type="entry name" value="Elongation factor Tu"/>
    <property type="match status" value="1"/>
</dbReference>
<dbReference type="FunFam" id="3.40.50.300:FF:000003">
    <property type="entry name" value="Elongation factor Tu"/>
    <property type="match status" value="1"/>
</dbReference>
<dbReference type="Gene3D" id="3.40.50.300">
    <property type="entry name" value="P-loop containing nucleotide triphosphate hydrolases"/>
    <property type="match status" value="1"/>
</dbReference>
<dbReference type="Gene3D" id="2.40.30.10">
    <property type="entry name" value="Translation factors"/>
    <property type="match status" value="2"/>
</dbReference>
<dbReference type="HAMAP" id="MF_00118_B">
    <property type="entry name" value="EF_Tu_B"/>
    <property type="match status" value="1"/>
</dbReference>
<dbReference type="InterPro" id="IPR041709">
    <property type="entry name" value="EF-Tu_GTP-bd"/>
</dbReference>
<dbReference type="InterPro" id="IPR050055">
    <property type="entry name" value="EF-Tu_GTPase"/>
</dbReference>
<dbReference type="InterPro" id="IPR004161">
    <property type="entry name" value="EFTu-like_2"/>
</dbReference>
<dbReference type="InterPro" id="IPR033720">
    <property type="entry name" value="EFTU_2"/>
</dbReference>
<dbReference type="InterPro" id="IPR031157">
    <property type="entry name" value="G_TR_CS"/>
</dbReference>
<dbReference type="InterPro" id="IPR027417">
    <property type="entry name" value="P-loop_NTPase"/>
</dbReference>
<dbReference type="InterPro" id="IPR005225">
    <property type="entry name" value="Small_GTP-bd"/>
</dbReference>
<dbReference type="InterPro" id="IPR000795">
    <property type="entry name" value="T_Tr_GTP-bd_dom"/>
</dbReference>
<dbReference type="InterPro" id="IPR009000">
    <property type="entry name" value="Transl_B-barrel_sf"/>
</dbReference>
<dbReference type="InterPro" id="IPR009001">
    <property type="entry name" value="Transl_elong_EF1A/Init_IF2_C"/>
</dbReference>
<dbReference type="InterPro" id="IPR004541">
    <property type="entry name" value="Transl_elong_EFTu/EF1A_bac/org"/>
</dbReference>
<dbReference type="InterPro" id="IPR004160">
    <property type="entry name" value="Transl_elong_EFTu/EF1A_C"/>
</dbReference>
<dbReference type="NCBIfam" id="TIGR00485">
    <property type="entry name" value="EF-Tu"/>
    <property type="match status" value="1"/>
</dbReference>
<dbReference type="NCBIfam" id="NF000766">
    <property type="entry name" value="PRK00049.1"/>
    <property type="match status" value="1"/>
</dbReference>
<dbReference type="NCBIfam" id="NF009372">
    <property type="entry name" value="PRK12735.1"/>
    <property type="match status" value="1"/>
</dbReference>
<dbReference type="NCBIfam" id="NF009373">
    <property type="entry name" value="PRK12736.1"/>
    <property type="match status" value="1"/>
</dbReference>
<dbReference type="NCBIfam" id="TIGR00231">
    <property type="entry name" value="small_GTP"/>
    <property type="match status" value="1"/>
</dbReference>
<dbReference type="PANTHER" id="PTHR43721:SF22">
    <property type="entry name" value="ELONGATION FACTOR TU, MITOCHONDRIAL"/>
    <property type="match status" value="1"/>
</dbReference>
<dbReference type="PANTHER" id="PTHR43721">
    <property type="entry name" value="ELONGATION FACTOR TU-RELATED"/>
    <property type="match status" value="1"/>
</dbReference>
<dbReference type="Pfam" id="PF00009">
    <property type="entry name" value="GTP_EFTU"/>
    <property type="match status" value="1"/>
</dbReference>
<dbReference type="Pfam" id="PF03144">
    <property type="entry name" value="GTP_EFTU_D2"/>
    <property type="match status" value="1"/>
</dbReference>
<dbReference type="Pfam" id="PF03143">
    <property type="entry name" value="GTP_EFTU_D3"/>
    <property type="match status" value="1"/>
</dbReference>
<dbReference type="PRINTS" id="PR00315">
    <property type="entry name" value="ELONGATNFCT"/>
</dbReference>
<dbReference type="SUPFAM" id="SSF50465">
    <property type="entry name" value="EF-Tu/eEF-1alpha/eIF2-gamma C-terminal domain"/>
    <property type="match status" value="1"/>
</dbReference>
<dbReference type="SUPFAM" id="SSF52540">
    <property type="entry name" value="P-loop containing nucleoside triphosphate hydrolases"/>
    <property type="match status" value="1"/>
</dbReference>
<dbReference type="SUPFAM" id="SSF50447">
    <property type="entry name" value="Translation proteins"/>
    <property type="match status" value="1"/>
</dbReference>
<dbReference type="PROSITE" id="PS00301">
    <property type="entry name" value="G_TR_1"/>
    <property type="match status" value="1"/>
</dbReference>
<dbReference type="PROSITE" id="PS51722">
    <property type="entry name" value="G_TR_2"/>
    <property type="match status" value="1"/>
</dbReference>